<name>Y2372_ALBFT</name>
<evidence type="ECO:0000255" key="1">
    <source>
        <dbReference type="HAMAP-Rule" id="MF_00652"/>
    </source>
</evidence>
<feature type="chain" id="PRO_0000262049" description="UPF0246 protein Rfer_2372">
    <location>
        <begin position="1"/>
        <end position="259"/>
    </location>
</feature>
<keyword id="KW-1185">Reference proteome</keyword>
<gene>
    <name type="ordered locus">Rfer_2372</name>
</gene>
<protein>
    <recommendedName>
        <fullName evidence="1">UPF0246 protein Rfer_2372</fullName>
    </recommendedName>
</protein>
<comment type="similarity">
    <text evidence="1">Belongs to the UPF0246 family.</text>
</comment>
<accession>Q21VW4</accession>
<proteinExistence type="inferred from homology"/>
<reference key="1">
    <citation type="submission" date="2006-02" db="EMBL/GenBank/DDBJ databases">
        <title>Complete sequence of chromosome of Rhodoferax ferrireducens DSM 15236.</title>
        <authorList>
            <person name="Copeland A."/>
            <person name="Lucas S."/>
            <person name="Lapidus A."/>
            <person name="Barry K."/>
            <person name="Detter J.C."/>
            <person name="Glavina del Rio T."/>
            <person name="Hammon N."/>
            <person name="Israni S."/>
            <person name="Pitluck S."/>
            <person name="Brettin T."/>
            <person name="Bruce D."/>
            <person name="Han C."/>
            <person name="Tapia R."/>
            <person name="Gilna P."/>
            <person name="Kiss H."/>
            <person name="Schmutz J."/>
            <person name="Larimer F."/>
            <person name="Land M."/>
            <person name="Kyrpides N."/>
            <person name="Ivanova N."/>
            <person name="Richardson P."/>
        </authorList>
    </citation>
    <scope>NUCLEOTIDE SEQUENCE [LARGE SCALE GENOMIC DNA]</scope>
    <source>
        <strain>ATCC BAA-621 / DSM 15236 / T118</strain>
    </source>
</reference>
<sequence>MLFLLSPAKSLDFEKPAAPVPHTQPLFIPQAAELIDILKKKSPRQIASLMSLSDTLAGLNVARYQAWVPKFTAKNAKQAVLAFNGDVYEGLDAKSLPVDDLKWLQDHVCILSGLYGVLRPLDYMQPYRLEMGTKLANPQGKDLYQFWGAQISDYLNIRLHKNAAPVVVNLASQEYFRAVDRKALQARVLECVFQEYRGGQYKIISFYAKRARGLMARFAAEHRLSKPKQLEGFDAEGYAFDAAASEPDRLVFRRQQPLS</sequence>
<organism>
    <name type="scientific">Albidiferax ferrireducens (strain ATCC BAA-621 / DSM 15236 / T118)</name>
    <name type="common">Rhodoferax ferrireducens</name>
    <dbReference type="NCBI Taxonomy" id="338969"/>
    <lineage>
        <taxon>Bacteria</taxon>
        <taxon>Pseudomonadati</taxon>
        <taxon>Pseudomonadota</taxon>
        <taxon>Betaproteobacteria</taxon>
        <taxon>Burkholderiales</taxon>
        <taxon>Comamonadaceae</taxon>
        <taxon>Rhodoferax</taxon>
    </lineage>
</organism>
<dbReference type="EMBL" id="CP000267">
    <property type="protein sequence ID" value="ABD70089.1"/>
    <property type="molecule type" value="Genomic_DNA"/>
</dbReference>
<dbReference type="RefSeq" id="WP_011464657.1">
    <property type="nucleotide sequence ID" value="NC_007908.1"/>
</dbReference>
<dbReference type="SMR" id="Q21VW4"/>
<dbReference type="STRING" id="338969.Rfer_2372"/>
<dbReference type="KEGG" id="rfr:Rfer_2372"/>
<dbReference type="eggNOG" id="COG3022">
    <property type="taxonomic scope" value="Bacteria"/>
</dbReference>
<dbReference type="HOGENOM" id="CLU_061989_0_0_4"/>
<dbReference type="OrthoDB" id="9777133at2"/>
<dbReference type="Proteomes" id="UP000008332">
    <property type="component" value="Chromosome"/>
</dbReference>
<dbReference type="GO" id="GO:0005829">
    <property type="term" value="C:cytosol"/>
    <property type="evidence" value="ECO:0007669"/>
    <property type="project" value="TreeGrafter"/>
</dbReference>
<dbReference type="GO" id="GO:0033194">
    <property type="term" value="P:response to hydroperoxide"/>
    <property type="evidence" value="ECO:0007669"/>
    <property type="project" value="TreeGrafter"/>
</dbReference>
<dbReference type="HAMAP" id="MF_00652">
    <property type="entry name" value="UPF0246"/>
    <property type="match status" value="1"/>
</dbReference>
<dbReference type="InterPro" id="IPR005583">
    <property type="entry name" value="YaaA"/>
</dbReference>
<dbReference type="NCBIfam" id="NF002542">
    <property type="entry name" value="PRK02101.1-3"/>
    <property type="match status" value="1"/>
</dbReference>
<dbReference type="PANTHER" id="PTHR30283:SF4">
    <property type="entry name" value="PEROXIDE STRESS RESISTANCE PROTEIN YAAA"/>
    <property type="match status" value="1"/>
</dbReference>
<dbReference type="PANTHER" id="PTHR30283">
    <property type="entry name" value="PEROXIDE STRESS RESPONSE PROTEIN YAAA"/>
    <property type="match status" value="1"/>
</dbReference>
<dbReference type="Pfam" id="PF03883">
    <property type="entry name" value="H2O2_YaaD"/>
    <property type="match status" value="1"/>
</dbReference>